<reference key="1">
    <citation type="journal article" date="1992" name="Proc. Natl. Acad. Sci. U.S.A.">
        <title>Sequence analysis of cytoplasmic mRNA-binding proteins of Xenopus oocytes identifies a family of RNA-binding proteins.</title>
        <authorList>
            <person name="Murray M.T."/>
            <person name="Schiller D.L."/>
            <person name="Franke W.W."/>
        </authorList>
    </citation>
    <scope>NUCLEOTIDE SEQUENCE [MRNA]</scope>
    <scope>PROTEIN SEQUENCE OF 213-248</scope>
    <scope>SUBUNIT</scope>
    <scope>SUBCELLULAR LOCATION</scope>
    <scope>DEVELOPMENTAL STAGE</scope>
    <source>
        <tissue>Ovary</tissue>
    </source>
</reference>
<reference key="2">
    <citation type="submission" date="2007-12" db="EMBL/GenBank/DDBJ databases">
        <authorList>
            <consortium name="NIH - Xenopus Gene Collection (XGC) project"/>
        </authorList>
    </citation>
    <scope>NUCLEOTIDE SEQUENCE [LARGE SCALE MRNA]</scope>
    <source>
        <tissue>Testis</tissue>
    </source>
</reference>
<reference key="3">
    <citation type="journal article" date="1991" name="FEBS Lett.">
        <title>Purification of two thermostable components of messenger ribonucleoprotein particles (mRNPs) from Xenopus laevis oocytes, belonging to a novel class of RNA-binding proteins.</title>
        <authorList>
            <person name="Deschamps S."/>
            <person name="Viel A."/>
            <person name="Denis H."/>
            <person name="le Maire M."/>
        </authorList>
    </citation>
    <scope>PARTIAL PROTEIN SEQUENCE</scope>
    <scope>PHOSPHORYLATION</scope>
    <source>
        <tissue>Oocyte</tissue>
    </source>
</reference>
<reference key="4">
    <citation type="journal article" date="1991" name="J. Cell Biol.">
        <title>Different forms of soluble cytoplasmic mRNA binding proteins and particles in Xenopus laevis oocytes and embryos.</title>
        <authorList>
            <person name="Murray M.T."/>
            <person name="Krohne G."/>
            <person name="Franke W.W."/>
        </authorList>
    </citation>
    <scope>FUNCTION</scope>
</reference>
<reference key="5">
    <citation type="journal article" date="2009" name="J. Biol. Chem.">
        <title>Participation of Xenopus Elr-type proteins in vegetal mRNA localization during oogenesis.</title>
        <authorList>
            <person name="Arthur P.K."/>
            <person name="Claussen M."/>
            <person name="Koch S."/>
            <person name="Tarbashevich K."/>
            <person name="Jahn O."/>
            <person name="Pieler T."/>
        </authorList>
    </citation>
    <scope>IDENTIFICATION IN A RIBONUCLEOPROTEIN COMPLEX WITH ELAVL1; ELAVL2; IGF2BP3; STAU1; DDX6 AND LSM14B</scope>
</reference>
<comment type="function">
    <text evidence="2">Putative translation regulator. May be involved in the developmental translational regulation of maternal mRNAs.</text>
</comment>
<comment type="subunit">
    <text evidence="3 5">Possibly forms a heterodimer with p54 in the 6S and 15S mRNA-binding particles. Component of a ribonucleoprotein (RNP) complex, composed at least of elavl1/elrA and/or elavl2/elrB, igf2bp3/vg1RBP, ddx6/Xp54, ybx2/frgy2, lsm14b/rap55b and, in a subset of RNP complexes, stau1/staufen.</text>
</comment>
<comment type="interaction">
    <interactant intactId="EBI-8486848">
        <id>P45441</id>
    </interactant>
    <interactant intactId="EBI-619004">
        <id>O73932</id>
        <label>igf2bp3-a</label>
    </interactant>
    <organismsDiffer>false</organismsDiffer>
    <experiments>2</experiments>
</comment>
<comment type="subcellular location">
    <subcellularLocation>
        <location evidence="3">Cytoplasm</location>
    </subcellularLocation>
    <text>Either free or associated with ribonucleoprotein particles.</text>
</comment>
<comment type="developmental stage">
    <text evidence="3">Expressed maternally. Expression peaks in the early stage II oocyte and levels are maintained throughout oogenesis.</text>
</comment>
<comment type="PTM">
    <text evidence="4">Phosphorylation activates in vitro RNA binding.</text>
</comment>
<organism>
    <name type="scientific">Xenopus laevis</name>
    <name type="common">African clawed frog</name>
    <dbReference type="NCBI Taxonomy" id="8355"/>
    <lineage>
        <taxon>Eukaryota</taxon>
        <taxon>Metazoa</taxon>
        <taxon>Chordata</taxon>
        <taxon>Craniata</taxon>
        <taxon>Vertebrata</taxon>
        <taxon>Euteleostomi</taxon>
        <taxon>Amphibia</taxon>
        <taxon>Batrachia</taxon>
        <taxon>Anura</taxon>
        <taxon>Pipoidea</taxon>
        <taxon>Pipidae</taxon>
        <taxon>Xenopodinae</taxon>
        <taxon>Xenopus</taxon>
        <taxon>Xenopus</taxon>
    </lineage>
</organism>
<sequence>MSEAEPRETEAVTQPEPAPEIHKPDIVPPRNQINKKLLATQVQGTVKWFNVRNGYGFINRNDSKEDVFVHQTAIKKNNPRKFLRSVGDGETVEFDVVEGEKGAEAANVTGPGGVPVKGSRFAPNRRRFRRQFYRPRADTAGESGGEGVSPEQMSEGEKGEETSPQQRPQRRRPPPFFYRRRFRRGPRPNNQQNQGAEVTDQSENKDPAAPTSEALASGDGQQRPPPRRFQQRFRRPFRPRPPPPQTPEGGDGEAKAEGEPQRQRNRPYVQRRRRQQPPTVQGESKAEPSEHPASEEGTPSDAPTDDGAPVETSEAGVEDTTAPE</sequence>
<protein>
    <recommendedName>
        <fullName>Y-box-binding protein 2-B</fullName>
    </recommendedName>
    <alternativeName>
        <fullName>Cytoplasmic RNA-binding protein p54</fullName>
    </alternativeName>
    <alternativeName>
        <fullName>Frog Y-box protein 2-B</fullName>
        <shortName>FRGY2b</shortName>
    </alternativeName>
    <alternativeName>
        <fullName>Messenger ribonucleoprotein particle 3</fullName>
        <shortName>mRNP3</shortName>
    </alternativeName>
</protein>
<dbReference type="EMBL" id="M80257">
    <property type="protein sequence ID" value="AAA49924.1"/>
    <property type="molecule type" value="mRNA"/>
</dbReference>
<dbReference type="EMBL" id="BC155913">
    <property type="protein sequence ID" value="AAI55914.1"/>
    <property type="molecule type" value="mRNA"/>
</dbReference>
<dbReference type="PIR" id="A41786">
    <property type="entry name" value="A41786"/>
</dbReference>
<dbReference type="SMR" id="P45441"/>
<dbReference type="BioGRID" id="99031">
    <property type="interactions" value="2"/>
</dbReference>
<dbReference type="IntAct" id="P45441">
    <property type="interactions" value="1"/>
</dbReference>
<dbReference type="MINT" id="P45441"/>
<dbReference type="GeneID" id="394429"/>
<dbReference type="KEGG" id="xla:394429"/>
<dbReference type="AGR" id="Xenbase:XB-GENE-6254213"/>
<dbReference type="CTD" id="394429"/>
<dbReference type="Xenbase" id="XB-GENE-6254213">
    <property type="gene designation" value="ybx2.S"/>
</dbReference>
<dbReference type="OrthoDB" id="203339at2759"/>
<dbReference type="Proteomes" id="UP000186698">
    <property type="component" value="Chromosome 3S"/>
</dbReference>
<dbReference type="Bgee" id="394429">
    <property type="expression patterns" value="Expressed in testis and 19 other cell types or tissues"/>
</dbReference>
<dbReference type="GO" id="GO:0005737">
    <property type="term" value="C:cytoplasm"/>
    <property type="evidence" value="ECO:0007669"/>
    <property type="project" value="UniProtKB-SubCell"/>
</dbReference>
<dbReference type="GO" id="GO:0005634">
    <property type="term" value="C:nucleus"/>
    <property type="evidence" value="ECO:0000318"/>
    <property type="project" value="GO_Central"/>
</dbReference>
<dbReference type="GO" id="GO:1990904">
    <property type="term" value="C:ribonucleoprotein complex"/>
    <property type="evidence" value="ECO:0000353"/>
    <property type="project" value="UniProtKB"/>
</dbReference>
<dbReference type="GO" id="GO:0003676">
    <property type="term" value="F:nucleic acid binding"/>
    <property type="evidence" value="ECO:0000318"/>
    <property type="project" value="GO_Central"/>
</dbReference>
<dbReference type="GO" id="GO:0003723">
    <property type="term" value="F:RNA binding"/>
    <property type="evidence" value="ECO:0007669"/>
    <property type="project" value="UniProtKB-KW"/>
</dbReference>
<dbReference type="GO" id="GO:0010468">
    <property type="term" value="P:regulation of gene expression"/>
    <property type="evidence" value="ECO:0000318"/>
    <property type="project" value="GO_Central"/>
</dbReference>
<dbReference type="GO" id="GO:0006417">
    <property type="term" value="P:regulation of translation"/>
    <property type="evidence" value="ECO:0007669"/>
    <property type="project" value="UniProtKB-KW"/>
</dbReference>
<dbReference type="CDD" id="cd04458">
    <property type="entry name" value="CSP_CDS"/>
    <property type="match status" value="1"/>
</dbReference>
<dbReference type="FunFam" id="2.40.50.140:FF:000054">
    <property type="entry name" value="Nuclease-sensitive element-binding protein 1"/>
    <property type="match status" value="1"/>
</dbReference>
<dbReference type="Gene3D" id="2.40.50.140">
    <property type="entry name" value="Nucleic acid-binding proteins"/>
    <property type="match status" value="1"/>
</dbReference>
<dbReference type="InterPro" id="IPR050181">
    <property type="entry name" value="Cold_shock_domain"/>
</dbReference>
<dbReference type="InterPro" id="IPR011129">
    <property type="entry name" value="CSD"/>
</dbReference>
<dbReference type="InterPro" id="IPR019844">
    <property type="entry name" value="CSD_CS"/>
</dbReference>
<dbReference type="InterPro" id="IPR002059">
    <property type="entry name" value="CSP_DNA-bd"/>
</dbReference>
<dbReference type="InterPro" id="IPR012340">
    <property type="entry name" value="NA-bd_OB-fold"/>
</dbReference>
<dbReference type="PANTHER" id="PTHR11544">
    <property type="entry name" value="COLD SHOCK DOMAIN CONTAINING PROTEINS"/>
    <property type="match status" value="1"/>
</dbReference>
<dbReference type="Pfam" id="PF00313">
    <property type="entry name" value="CSD"/>
    <property type="match status" value="1"/>
</dbReference>
<dbReference type="PRINTS" id="PR00050">
    <property type="entry name" value="COLDSHOCK"/>
</dbReference>
<dbReference type="SMART" id="SM00357">
    <property type="entry name" value="CSP"/>
    <property type="match status" value="1"/>
</dbReference>
<dbReference type="SUPFAM" id="SSF50249">
    <property type="entry name" value="Nucleic acid-binding proteins"/>
    <property type="match status" value="1"/>
</dbReference>
<dbReference type="PROSITE" id="PS00352">
    <property type="entry name" value="CSD_1"/>
    <property type="match status" value="1"/>
</dbReference>
<dbReference type="PROSITE" id="PS51857">
    <property type="entry name" value="CSD_2"/>
    <property type="match status" value="1"/>
</dbReference>
<feature type="chain" id="PRO_0000100228" description="Y-box-binding protein 2-B">
    <location>
        <begin position="1"/>
        <end position="324"/>
    </location>
</feature>
<feature type="domain" description="CSD">
    <location>
        <begin position="44"/>
        <end position="108"/>
    </location>
</feature>
<feature type="region of interest" description="Disordered" evidence="1">
    <location>
        <begin position="1"/>
        <end position="29"/>
    </location>
</feature>
<feature type="region of interest" description="Disordered" evidence="1">
    <location>
        <begin position="103"/>
        <end position="324"/>
    </location>
</feature>
<feature type="compositionally biased region" description="Basic and acidic residues" evidence="1">
    <location>
        <begin position="1"/>
        <end position="10"/>
    </location>
</feature>
<feature type="compositionally biased region" description="Basic residues" evidence="1">
    <location>
        <begin position="123"/>
        <end position="133"/>
    </location>
</feature>
<feature type="compositionally biased region" description="Basic residues" evidence="1">
    <location>
        <begin position="168"/>
        <end position="186"/>
    </location>
</feature>
<feature type="compositionally biased region" description="Basic residues" evidence="1">
    <location>
        <begin position="225"/>
        <end position="238"/>
    </location>
</feature>
<feature type="compositionally biased region" description="Basic and acidic residues" evidence="1">
    <location>
        <begin position="252"/>
        <end position="262"/>
    </location>
</feature>
<feature type="compositionally biased region" description="Basic residues" evidence="1">
    <location>
        <begin position="263"/>
        <end position="275"/>
    </location>
</feature>
<feature type="compositionally biased region" description="Basic and acidic residues" evidence="1">
    <location>
        <begin position="284"/>
        <end position="294"/>
    </location>
</feature>
<feature type="sequence conflict" description="In Ref. 1; AAA49924." evidence="6" ref="1">
    <original>A</original>
    <variation>G</variation>
    <location>
        <position position="18"/>
    </location>
</feature>
<feature type="sequence conflict" description="In Ref. 1; AAA49924." evidence="6" ref="1">
    <original>RR</original>
    <variation>ST</variation>
    <location>
        <begin position="125"/>
        <end position="126"/>
    </location>
</feature>
<feature type="sequence conflict" description="In Ref. 1; AAA49924." evidence="6" ref="1">
    <original>R</original>
    <variation>A</variation>
    <location>
        <position position="274"/>
    </location>
</feature>
<evidence type="ECO:0000256" key="1">
    <source>
        <dbReference type="SAM" id="MobiDB-lite"/>
    </source>
</evidence>
<evidence type="ECO:0000269" key="2">
    <source>
    </source>
</evidence>
<evidence type="ECO:0000269" key="3">
    <source>
    </source>
</evidence>
<evidence type="ECO:0000269" key="4">
    <source>
    </source>
</evidence>
<evidence type="ECO:0000269" key="5">
    <source>
    </source>
</evidence>
<evidence type="ECO:0000305" key="6"/>
<keyword id="KW-0963">Cytoplasm</keyword>
<keyword id="KW-0903">Direct protein sequencing</keyword>
<keyword id="KW-0597">Phosphoprotein</keyword>
<keyword id="KW-1185">Reference proteome</keyword>
<keyword id="KW-0687">Ribonucleoprotein</keyword>
<keyword id="KW-0694">RNA-binding</keyword>
<keyword id="KW-0804">Transcription</keyword>
<keyword id="KW-0805">Transcription regulation</keyword>
<keyword id="KW-0810">Translation regulation</keyword>
<accession>P45441</accession>
<accession>A9JS45</accession>
<gene>
    <name type="primary">ybx2-b</name>
    <name type="synonym">frgy2-b</name>
</gene>
<proteinExistence type="evidence at protein level"/>
<name>YBX2B_XENLA</name>